<evidence type="ECO:0000250" key="1"/>
<evidence type="ECO:0000250" key="2">
    <source>
        <dbReference type="UniProtKB" id="P00157"/>
    </source>
</evidence>
<evidence type="ECO:0000250" key="3">
    <source>
        <dbReference type="UniProtKB" id="P00163"/>
    </source>
</evidence>
<evidence type="ECO:0000255" key="4"/>
<evidence type="ECO:0000255" key="5">
    <source>
        <dbReference type="PROSITE-ProRule" id="PRU00967"/>
    </source>
</evidence>
<evidence type="ECO:0000255" key="6">
    <source>
        <dbReference type="PROSITE-ProRule" id="PRU00968"/>
    </source>
</evidence>
<proteinExistence type="inferred from homology"/>
<organism>
    <name type="scientific">Leptorhynchoides thecatus</name>
    <name type="common">Thorny-headed worm</name>
    <name type="synonym">Echinorhynchus thecatus</name>
    <dbReference type="NCBI Taxonomy" id="60532"/>
    <lineage>
        <taxon>Eukaryota</taxon>
        <taxon>Metazoa</taxon>
        <taxon>Spiralia</taxon>
        <taxon>Lophotrochozoa</taxon>
        <taxon>Acanthocephala</taxon>
        <taxon>Palaeacanthocephala</taxon>
        <taxon>Echinorhynchida</taxon>
        <taxon>Rhadinorhynchidae</taxon>
        <taxon>Leptorhynchoides</taxon>
    </lineage>
</organism>
<comment type="function">
    <text evidence="3">Component of the ubiquinol-cytochrome c reductase complex (complex III or cytochrome b-c1 complex) that is part of the mitochondrial respiratory chain. The b-c1 complex mediates electron transfer from ubiquinol to cytochrome c. Contributes to the generation of a proton gradient across the mitochondrial membrane that is then used for ATP synthesis.</text>
</comment>
<comment type="cofactor">
    <cofactor evidence="3">
        <name>heme b</name>
        <dbReference type="ChEBI" id="CHEBI:60344"/>
    </cofactor>
    <text evidence="3">Binds 2 heme b groups non-covalently.</text>
</comment>
<comment type="subunit">
    <text evidence="1">The main subunits of complex b-c1 are: cytochrome b, cytochrome c1 and the Rieske protein.</text>
</comment>
<comment type="subcellular location">
    <subcellularLocation>
        <location evidence="3">Mitochondrion inner membrane</location>
        <topology evidence="3">Multi-pass membrane protein</topology>
    </subcellularLocation>
</comment>
<comment type="similarity">
    <text evidence="5 6">Belongs to the cytochrome b family.</text>
</comment>
<comment type="caution">
    <text evidence="3">The protein contains an even number of transmembrane helices, fewer than predicted by bioinformatics tools.</text>
</comment>
<name>CYB_LEPTH</name>
<reference key="1">
    <citation type="journal article" date="2005" name="J. Mol. Evol.">
        <title>First sequenced mitochondrial genome from the phylum Acanthocephala (Leptorhynchoides thecatus) and its phylogenetic position within Metazoa.</title>
        <authorList>
            <person name="Steinauer M.L."/>
            <person name="Nickol B.B."/>
            <person name="Broughton R."/>
            <person name="Orti G."/>
        </authorList>
    </citation>
    <scope>NUCLEOTIDE SEQUENCE [GENOMIC DNA]</scope>
</reference>
<keyword id="KW-0249">Electron transport</keyword>
<keyword id="KW-0349">Heme</keyword>
<keyword id="KW-0408">Iron</keyword>
<keyword id="KW-0472">Membrane</keyword>
<keyword id="KW-0479">Metal-binding</keyword>
<keyword id="KW-0496">Mitochondrion</keyword>
<keyword id="KW-0999">Mitochondrion inner membrane</keyword>
<keyword id="KW-0679">Respiratory chain</keyword>
<keyword id="KW-0812">Transmembrane</keyword>
<keyword id="KW-1133">Transmembrane helix</keyword>
<keyword id="KW-0813">Transport</keyword>
<keyword id="KW-0830">Ubiquinone</keyword>
<protein>
    <recommendedName>
        <fullName>Cytochrome b</fullName>
    </recommendedName>
    <alternativeName>
        <fullName>Complex III subunit 3</fullName>
    </alternativeName>
    <alternativeName>
        <fullName>Complex III subunit III</fullName>
    </alternativeName>
    <alternativeName>
        <fullName>Cytochrome b-c1 complex subunit 3</fullName>
    </alternativeName>
    <alternativeName>
        <fullName>Ubiquinol-cytochrome-c reductase complex cytochrome b subunit</fullName>
    </alternativeName>
</protein>
<dbReference type="EMBL" id="AY562383">
    <property type="protein sequence ID" value="AAT64940.1"/>
    <property type="molecule type" value="Genomic_DNA"/>
</dbReference>
<dbReference type="RefSeq" id="YP_214843.1">
    <property type="nucleotide sequence ID" value="NC_006892.1"/>
</dbReference>
<dbReference type="SMR" id="Q5DNB7"/>
<dbReference type="GeneID" id="3332212"/>
<dbReference type="CTD" id="4519"/>
<dbReference type="GO" id="GO:0005743">
    <property type="term" value="C:mitochondrial inner membrane"/>
    <property type="evidence" value="ECO:0007669"/>
    <property type="project" value="UniProtKB-SubCell"/>
</dbReference>
<dbReference type="GO" id="GO:0046872">
    <property type="term" value="F:metal ion binding"/>
    <property type="evidence" value="ECO:0007669"/>
    <property type="project" value="UniProtKB-KW"/>
</dbReference>
<dbReference type="GO" id="GO:0008121">
    <property type="term" value="F:ubiquinol-cytochrome-c reductase activity"/>
    <property type="evidence" value="ECO:0007669"/>
    <property type="project" value="TreeGrafter"/>
</dbReference>
<dbReference type="GO" id="GO:0006122">
    <property type="term" value="P:mitochondrial electron transport, ubiquinol to cytochrome c"/>
    <property type="evidence" value="ECO:0007669"/>
    <property type="project" value="TreeGrafter"/>
</dbReference>
<dbReference type="CDD" id="cd00284">
    <property type="entry name" value="Cytochrome_b_N"/>
    <property type="match status" value="1"/>
</dbReference>
<dbReference type="Gene3D" id="1.20.810.10">
    <property type="entry name" value="Cytochrome Bc1 Complex, Chain C"/>
    <property type="match status" value="1"/>
</dbReference>
<dbReference type="InterPro" id="IPR005798">
    <property type="entry name" value="Cyt_b/b6_C"/>
</dbReference>
<dbReference type="InterPro" id="IPR036150">
    <property type="entry name" value="Cyt_b/b6_C_sf"/>
</dbReference>
<dbReference type="InterPro" id="IPR005797">
    <property type="entry name" value="Cyt_b/b6_N"/>
</dbReference>
<dbReference type="InterPro" id="IPR027387">
    <property type="entry name" value="Cytb/b6-like_sf"/>
</dbReference>
<dbReference type="InterPro" id="IPR048259">
    <property type="entry name" value="Cytochrome_b_N_euk/bac"/>
</dbReference>
<dbReference type="InterPro" id="IPR016174">
    <property type="entry name" value="Di-haem_cyt_TM"/>
</dbReference>
<dbReference type="PANTHER" id="PTHR19271">
    <property type="entry name" value="CYTOCHROME B"/>
    <property type="match status" value="1"/>
</dbReference>
<dbReference type="PANTHER" id="PTHR19271:SF16">
    <property type="entry name" value="CYTOCHROME B"/>
    <property type="match status" value="1"/>
</dbReference>
<dbReference type="Pfam" id="PF00032">
    <property type="entry name" value="Cytochrom_B_C"/>
    <property type="match status" value="1"/>
</dbReference>
<dbReference type="Pfam" id="PF00033">
    <property type="entry name" value="Cytochrome_B"/>
    <property type="match status" value="1"/>
</dbReference>
<dbReference type="SUPFAM" id="SSF81648">
    <property type="entry name" value="a domain/subunit of cytochrome bc1 complex (Ubiquinol-cytochrome c reductase)"/>
    <property type="match status" value="1"/>
</dbReference>
<dbReference type="SUPFAM" id="SSF81342">
    <property type="entry name" value="Transmembrane di-heme cytochromes"/>
    <property type="match status" value="1"/>
</dbReference>
<dbReference type="PROSITE" id="PS51003">
    <property type="entry name" value="CYTB_CTER"/>
    <property type="match status" value="1"/>
</dbReference>
<dbReference type="PROSITE" id="PS51002">
    <property type="entry name" value="CYTB_NTER"/>
    <property type="match status" value="1"/>
</dbReference>
<accession>Q5DNB7</accession>
<gene>
    <name type="primary">mt:Cyt-b</name>
    <name type="synonym">Cob</name>
    <name type="synonym">cytb</name>
</gene>
<geneLocation type="mitochondrion"/>
<feature type="chain" id="PRO_0000357461" description="Cytochrome b">
    <location>
        <begin position="1"/>
        <end position="372"/>
    </location>
</feature>
<feature type="transmembrane region" description="Helical" evidence="3">
    <location>
        <begin position="29"/>
        <end position="49"/>
    </location>
</feature>
<feature type="transmembrane region" description="Helical" evidence="3">
    <location>
        <begin position="73"/>
        <end position="95"/>
    </location>
</feature>
<feature type="transmembrane region" description="Helical" evidence="3">
    <location>
        <begin position="108"/>
        <end position="128"/>
    </location>
</feature>
<feature type="transmembrane region" description="Helical" evidence="3">
    <location>
        <begin position="174"/>
        <end position="194"/>
    </location>
</feature>
<feature type="transmembrane region" description="Helical" evidence="3">
    <location>
        <begin position="220"/>
        <end position="240"/>
    </location>
</feature>
<feature type="transmembrane region" description="Helical" evidence="4">
    <location>
        <begin position="284"/>
        <end position="301"/>
    </location>
</feature>
<feature type="transmembrane region" description="Helical" evidence="4">
    <location>
        <begin position="311"/>
        <end position="336"/>
    </location>
</feature>
<feature type="transmembrane region" description="Helical" evidence="4">
    <location>
        <begin position="344"/>
        <end position="363"/>
    </location>
</feature>
<feature type="binding site" description="axial binding residue" evidence="3">
    <location>
        <position position="79"/>
    </location>
    <ligand>
        <name>heme b</name>
        <dbReference type="ChEBI" id="CHEBI:60344"/>
        <label>b562</label>
    </ligand>
    <ligandPart>
        <name>Fe</name>
        <dbReference type="ChEBI" id="CHEBI:18248"/>
    </ligandPart>
</feature>
<feature type="binding site" description="axial binding residue" evidence="3">
    <location>
        <position position="93"/>
    </location>
    <ligand>
        <name>heme b</name>
        <dbReference type="ChEBI" id="CHEBI:60344"/>
        <label>b566</label>
    </ligand>
    <ligandPart>
        <name>Fe</name>
        <dbReference type="ChEBI" id="CHEBI:18248"/>
    </ligandPart>
</feature>
<feature type="binding site" description="axial binding residue" evidence="3">
    <location>
        <position position="178"/>
    </location>
    <ligand>
        <name>heme b</name>
        <dbReference type="ChEBI" id="CHEBI:60344"/>
        <label>b562</label>
    </ligand>
    <ligandPart>
        <name>Fe</name>
        <dbReference type="ChEBI" id="CHEBI:18248"/>
    </ligandPart>
</feature>
<feature type="binding site" description="axial binding residue" evidence="3">
    <location>
        <position position="192"/>
    </location>
    <ligand>
        <name>heme b</name>
        <dbReference type="ChEBI" id="CHEBI:60344"/>
        <label>b566</label>
    </ligand>
    <ligandPart>
        <name>Fe</name>
        <dbReference type="ChEBI" id="CHEBI:18248"/>
    </ligandPart>
</feature>
<feature type="binding site" evidence="2">
    <location>
        <position position="197"/>
    </location>
    <ligand>
        <name>a ubiquinone</name>
        <dbReference type="ChEBI" id="CHEBI:16389"/>
    </ligand>
</feature>
<sequence>MFFNIFKSSIKGFLLNLPTPINLNYWYGFGSMLGLIYSIQIISGLILSWFYFIDLSGGFKSLILIMQDVWGGWFIRFIHSSGVSLFMFIMYLHILRGLIYGSFCKVDVWYSGILLLFICMGSAFLGYVLPWGSMSYWGMTVVTNMLSAIPMVGVYLVETIWGGSSAGVSTLVRFFSFHYLLSLFIMVFILIHLILLHECGSSNPLGVYYSCEKFTFHPLFSLKDTLVFVLVVFLYWFCIFVCPYLLLDAINFEEINFMMTPSHIKPEWYFLFIYCILRSTPSKLGGVILMVMAILMLVFLGIGKNLGSVLMVKTLYWKLMLSSFLLVFIILTIMGGYTVEYPYDILGNVNSVLYFFIYVIMLLYSFMFNFVY</sequence>